<organism>
    <name type="scientific">Saccharopolyspora erythraea (strain ATCC 11635 / DSM 40517 / JCM 4748 / NBRC 13426 / NCIMB 8594 / NRRL 2338)</name>
    <dbReference type="NCBI Taxonomy" id="405948"/>
    <lineage>
        <taxon>Bacteria</taxon>
        <taxon>Bacillati</taxon>
        <taxon>Actinomycetota</taxon>
        <taxon>Actinomycetes</taxon>
        <taxon>Pseudonocardiales</taxon>
        <taxon>Pseudonocardiaceae</taxon>
        <taxon>Saccharopolyspora</taxon>
    </lineage>
</organism>
<reference key="1">
    <citation type="journal article" date="2007" name="Nat. Biotechnol.">
        <title>Complete genome sequence of the erythromycin-producing bacterium Saccharopolyspora erythraea NRRL23338.</title>
        <authorList>
            <person name="Oliynyk M."/>
            <person name="Samborskyy M."/>
            <person name="Lester J.B."/>
            <person name="Mironenko T."/>
            <person name="Scott N."/>
            <person name="Dickens S."/>
            <person name="Haydock S.F."/>
            <person name="Leadlay P.F."/>
        </authorList>
    </citation>
    <scope>NUCLEOTIDE SEQUENCE [LARGE SCALE GENOMIC DNA]</scope>
    <source>
        <strain>ATCC 11635 / DSM 40517 / JCM 4748 / NBRC 13426 / NCIMB 8594 / NRRL 2338</strain>
    </source>
</reference>
<keyword id="KW-0028">Amino-acid biosynthesis</keyword>
<keyword id="KW-0100">Branched-chain amino acid biosynthesis</keyword>
<keyword id="KW-0963">Cytoplasm</keyword>
<keyword id="KW-0432">Leucine biosynthesis</keyword>
<keyword id="KW-0460">Magnesium</keyword>
<keyword id="KW-0464">Manganese</keyword>
<keyword id="KW-0479">Metal-binding</keyword>
<keyword id="KW-0520">NAD</keyword>
<keyword id="KW-0560">Oxidoreductase</keyword>
<keyword id="KW-1185">Reference proteome</keyword>
<evidence type="ECO:0000255" key="1">
    <source>
        <dbReference type="HAMAP-Rule" id="MF_01035"/>
    </source>
</evidence>
<sequence>MRLAVIPGDGIGPEVVAEALKVLGEVVPDTEITRYDLGAARWHATGELLPESVLGELRQHDAILLGAVGDPSVPSGILERGLLLRLRFELDHHVNLRPARLYPGVKSPVSDPGEIDMVVVREGTEGPYAGNGGLLRKDTTHEIATEVSINTAFGVERVVRDAFARAASRPRKHLTLVHKTNVLTHAGSLWSRVVEEVSLQHPDVTVAYQHVDATTIHMVTDPSRFDVIVTDNLFGDIITDLAGAITGGIGLAASGNIDATRRNPSMFEPVHGSAPDIAGQGTADPTAAVLSVALLLDHVGQSEAARRVEAAVAFDLATRDHSAPGATFAIGDRLAALVSSREVAQQA</sequence>
<feature type="chain" id="PRO_1000063880" description="3-isopropylmalate dehydrogenase">
    <location>
        <begin position="1"/>
        <end position="347"/>
    </location>
</feature>
<feature type="binding site" evidence="1">
    <location>
        <position position="87"/>
    </location>
    <ligand>
        <name>substrate</name>
    </ligand>
</feature>
<feature type="binding site" evidence="1">
    <location>
        <position position="97"/>
    </location>
    <ligand>
        <name>substrate</name>
    </ligand>
</feature>
<feature type="binding site" evidence="1">
    <location>
        <position position="121"/>
    </location>
    <ligand>
        <name>substrate</name>
    </ligand>
</feature>
<feature type="binding site" evidence="1">
    <location>
        <position position="212"/>
    </location>
    <ligand>
        <name>Mg(2+)</name>
        <dbReference type="ChEBI" id="CHEBI:18420"/>
    </ligand>
</feature>
<feature type="binding site" evidence="1">
    <location>
        <position position="212"/>
    </location>
    <ligand>
        <name>substrate</name>
    </ligand>
</feature>
<feature type="binding site" evidence="1">
    <location>
        <position position="236"/>
    </location>
    <ligand>
        <name>Mg(2+)</name>
        <dbReference type="ChEBI" id="CHEBI:18420"/>
    </ligand>
</feature>
<feature type="binding site" evidence="1">
    <location>
        <position position="240"/>
    </location>
    <ligand>
        <name>Mg(2+)</name>
        <dbReference type="ChEBI" id="CHEBI:18420"/>
    </ligand>
</feature>
<feature type="binding site" evidence="1">
    <location>
        <begin position="272"/>
        <end position="284"/>
    </location>
    <ligand>
        <name>NAD(+)</name>
        <dbReference type="ChEBI" id="CHEBI:57540"/>
    </ligand>
</feature>
<feature type="site" description="Important for catalysis" evidence="1">
    <location>
        <position position="128"/>
    </location>
</feature>
<feature type="site" description="Important for catalysis" evidence="1">
    <location>
        <position position="179"/>
    </location>
</feature>
<proteinExistence type="inferred from homology"/>
<dbReference type="EC" id="1.1.1.85" evidence="1"/>
<dbReference type="EMBL" id="AM420293">
    <property type="protein sequence ID" value="CAM05327.1"/>
    <property type="molecule type" value="Genomic_DNA"/>
</dbReference>
<dbReference type="RefSeq" id="WP_009944401.1">
    <property type="nucleotide sequence ID" value="NC_009142.1"/>
</dbReference>
<dbReference type="SMR" id="A4FMQ2"/>
<dbReference type="STRING" id="405948.SACE_6154"/>
<dbReference type="KEGG" id="sen:SACE_6154"/>
<dbReference type="eggNOG" id="COG0473">
    <property type="taxonomic scope" value="Bacteria"/>
</dbReference>
<dbReference type="HOGENOM" id="CLU_031953_0_1_11"/>
<dbReference type="OrthoDB" id="5289857at2"/>
<dbReference type="UniPathway" id="UPA00048">
    <property type="reaction ID" value="UER00072"/>
</dbReference>
<dbReference type="Proteomes" id="UP000006728">
    <property type="component" value="Chromosome"/>
</dbReference>
<dbReference type="GO" id="GO:0005737">
    <property type="term" value="C:cytoplasm"/>
    <property type="evidence" value="ECO:0007669"/>
    <property type="project" value="UniProtKB-SubCell"/>
</dbReference>
<dbReference type="GO" id="GO:0003862">
    <property type="term" value="F:3-isopropylmalate dehydrogenase activity"/>
    <property type="evidence" value="ECO:0007669"/>
    <property type="project" value="UniProtKB-UniRule"/>
</dbReference>
<dbReference type="GO" id="GO:0000287">
    <property type="term" value="F:magnesium ion binding"/>
    <property type="evidence" value="ECO:0007669"/>
    <property type="project" value="InterPro"/>
</dbReference>
<dbReference type="GO" id="GO:0051287">
    <property type="term" value="F:NAD binding"/>
    <property type="evidence" value="ECO:0007669"/>
    <property type="project" value="InterPro"/>
</dbReference>
<dbReference type="GO" id="GO:0009098">
    <property type="term" value="P:L-leucine biosynthetic process"/>
    <property type="evidence" value="ECO:0007669"/>
    <property type="project" value="UniProtKB-UniRule"/>
</dbReference>
<dbReference type="Gene3D" id="3.40.718.10">
    <property type="entry name" value="Isopropylmalate Dehydrogenase"/>
    <property type="match status" value="1"/>
</dbReference>
<dbReference type="HAMAP" id="MF_01035">
    <property type="entry name" value="LeuB_type2"/>
    <property type="match status" value="1"/>
</dbReference>
<dbReference type="InterPro" id="IPR050501">
    <property type="entry name" value="ICDH/IPMDH"/>
</dbReference>
<dbReference type="InterPro" id="IPR019818">
    <property type="entry name" value="IsoCit/isopropylmalate_DH_CS"/>
</dbReference>
<dbReference type="InterPro" id="IPR024084">
    <property type="entry name" value="IsoPropMal-DH-like_dom"/>
</dbReference>
<dbReference type="InterPro" id="IPR023698">
    <property type="entry name" value="LeuB_actb"/>
</dbReference>
<dbReference type="NCBIfam" id="NF002898">
    <property type="entry name" value="PRK03437.1"/>
    <property type="match status" value="1"/>
</dbReference>
<dbReference type="PANTHER" id="PTHR43275">
    <property type="entry name" value="D-MALATE DEHYDROGENASE [DECARBOXYLATING]"/>
    <property type="match status" value="1"/>
</dbReference>
<dbReference type="PANTHER" id="PTHR43275:SF1">
    <property type="entry name" value="D-MALATE DEHYDROGENASE [DECARBOXYLATING]"/>
    <property type="match status" value="1"/>
</dbReference>
<dbReference type="Pfam" id="PF00180">
    <property type="entry name" value="Iso_dh"/>
    <property type="match status" value="1"/>
</dbReference>
<dbReference type="SMART" id="SM01329">
    <property type="entry name" value="Iso_dh"/>
    <property type="match status" value="1"/>
</dbReference>
<dbReference type="SUPFAM" id="SSF53659">
    <property type="entry name" value="Isocitrate/Isopropylmalate dehydrogenase-like"/>
    <property type="match status" value="1"/>
</dbReference>
<dbReference type="PROSITE" id="PS00470">
    <property type="entry name" value="IDH_IMDH"/>
    <property type="match status" value="1"/>
</dbReference>
<gene>
    <name evidence="1" type="primary">leuB</name>
    <name type="ordered locus">SACE_6154</name>
</gene>
<name>LEU3_SACEN</name>
<comment type="function">
    <text evidence="1">Catalyzes the oxidation of 3-carboxy-2-hydroxy-4-methylpentanoate (3-isopropylmalate) to 3-carboxy-4-methyl-2-oxopentanoate. The product decarboxylates to 4-methyl-2 oxopentanoate.</text>
</comment>
<comment type="catalytic activity">
    <reaction evidence="1">
        <text>(2R,3S)-3-isopropylmalate + NAD(+) = 4-methyl-2-oxopentanoate + CO2 + NADH</text>
        <dbReference type="Rhea" id="RHEA:32271"/>
        <dbReference type="ChEBI" id="CHEBI:16526"/>
        <dbReference type="ChEBI" id="CHEBI:17865"/>
        <dbReference type="ChEBI" id="CHEBI:35121"/>
        <dbReference type="ChEBI" id="CHEBI:57540"/>
        <dbReference type="ChEBI" id="CHEBI:57945"/>
        <dbReference type="EC" id="1.1.1.85"/>
    </reaction>
</comment>
<comment type="cofactor">
    <cofactor evidence="1">
        <name>Mg(2+)</name>
        <dbReference type="ChEBI" id="CHEBI:18420"/>
    </cofactor>
    <cofactor evidence="1">
        <name>Mn(2+)</name>
        <dbReference type="ChEBI" id="CHEBI:29035"/>
    </cofactor>
    <text evidence="1">Binds 1 Mg(2+) or Mn(2+) ion per subunit.</text>
</comment>
<comment type="pathway">
    <text evidence="1">Amino-acid biosynthesis; L-leucine biosynthesis; L-leucine from 3-methyl-2-oxobutanoate: step 3/4.</text>
</comment>
<comment type="subunit">
    <text evidence="1">Homodimer.</text>
</comment>
<comment type="subcellular location">
    <subcellularLocation>
        <location evidence="1">Cytoplasm</location>
    </subcellularLocation>
</comment>
<comment type="similarity">
    <text evidence="1">Belongs to the isocitrate and isopropylmalate dehydrogenases family. LeuB type 2 subfamily.</text>
</comment>
<accession>A4FMQ2</accession>
<protein>
    <recommendedName>
        <fullName evidence="1">3-isopropylmalate dehydrogenase</fullName>
        <ecNumber evidence="1">1.1.1.85</ecNumber>
    </recommendedName>
    <alternativeName>
        <fullName evidence="1">3-IPM-DH</fullName>
    </alternativeName>
    <alternativeName>
        <fullName evidence="1">Beta-IPM dehydrogenase</fullName>
        <shortName evidence="1">IMDH</shortName>
    </alternativeName>
</protein>